<proteinExistence type="inferred from homology"/>
<protein>
    <recommendedName>
        <fullName evidence="1">Cysteine--tRNA ligase</fullName>
        <ecNumber evidence="1">6.1.1.16</ecNumber>
    </recommendedName>
    <alternativeName>
        <fullName evidence="1">Cysteinyl-tRNA synthetase</fullName>
        <shortName evidence="1">CysRS</shortName>
    </alternativeName>
</protein>
<keyword id="KW-0030">Aminoacyl-tRNA synthetase</keyword>
<keyword id="KW-0067">ATP-binding</keyword>
<keyword id="KW-0963">Cytoplasm</keyword>
<keyword id="KW-0436">Ligase</keyword>
<keyword id="KW-0479">Metal-binding</keyword>
<keyword id="KW-0547">Nucleotide-binding</keyword>
<keyword id="KW-0648">Protein biosynthesis</keyword>
<keyword id="KW-0862">Zinc</keyword>
<dbReference type="EC" id="6.1.1.16" evidence="1"/>
<dbReference type="EMBL" id="CP000679">
    <property type="protein sequence ID" value="ABP66327.1"/>
    <property type="molecule type" value="Genomic_DNA"/>
</dbReference>
<dbReference type="RefSeq" id="WP_011916276.1">
    <property type="nucleotide sequence ID" value="NC_009437.1"/>
</dbReference>
<dbReference type="SMR" id="A4XHE2"/>
<dbReference type="STRING" id="351627.Csac_0708"/>
<dbReference type="KEGG" id="csc:Csac_0708"/>
<dbReference type="eggNOG" id="COG0215">
    <property type="taxonomic scope" value="Bacteria"/>
</dbReference>
<dbReference type="HOGENOM" id="CLU_013528_0_1_9"/>
<dbReference type="OrthoDB" id="9815130at2"/>
<dbReference type="Proteomes" id="UP000000256">
    <property type="component" value="Chromosome"/>
</dbReference>
<dbReference type="GO" id="GO:0005829">
    <property type="term" value="C:cytosol"/>
    <property type="evidence" value="ECO:0007669"/>
    <property type="project" value="TreeGrafter"/>
</dbReference>
<dbReference type="GO" id="GO:0005524">
    <property type="term" value="F:ATP binding"/>
    <property type="evidence" value="ECO:0007669"/>
    <property type="project" value="UniProtKB-UniRule"/>
</dbReference>
<dbReference type="GO" id="GO:0004817">
    <property type="term" value="F:cysteine-tRNA ligase activity"/>
    <property type="evidence" value="ECO:0007669"/>
    <property type="project" value="UniProtKB-UniRule"/>
</dbReference>
<dbReference type="GO" id="GO:0008270">
    <property type="term" value="F:zinc ion binding"/>
    <property type="evidence" value="ECO:0007669"/>
    <property type="project" value="UniProtKB-UniRule"/>
</dbReference>
<dbReference type="GO" id="GO:0006423">
    <property type="term" value="P:cysteinyl-tRNA aminoacylation"/>
    <property type="evidence" value="ECO:0007669"/>
    <property type="project" value="UniProtKB-UniRule"/>
</dbReference>
<dbReference type="CDD" id="cd00672">
    <property type="entry name" value="CysRS_core"/>
    <property type="match status" value="1"/>
</dbReference>
<dbReference type="FunFam" id="3.40.50.620:FF:000009">
    <property type="entry name" value="Cysteine--tRNA ligase"/>
    <property type="match status" value="1"/>
</dbReference>
<dbReference type="Gene3D" id="1.20.120.1910">
    <property type="entry name" value="Cysteine-tRNA ligase, C-terminal anti-codon recognition domain"/>
    <property type="match status" value="1"/>
</dbReference>
<dbReference type="Gene3D" id="3.40.50.620">
    <property type="entry name" value="HUPs"/>
    <property type="match status" value="1"/>
</dbReference>
<dbReference type="HAMAP" id="MF_00041">
    <property type="entry name" value="Cys_tRNA_synth"/>
    <property type="match status" value="1"/>
</dbReference>
<dbReference type="InterPro" id="IPR015803">
    <property type="entry name" value="Cys-tRNA-ligase"/>
</dbReference>
<dbReference type="InterPro" id="IPR015273">
    <property type="entry name" value="Cys-tRNA-synt_Ia_DALR"/>
</dbReference>
<dbReference type="InterPro" id="IPR024909">
    <property type="entry name" value="Cys-tRNA/MSH_ligase"/>
</dbReference>
<dbReference type="InterPro" id="IPR056411">
    <property type="entry name" value="CysS_C"/>
</dbReference>
<dbReference type="InterPro" id="IPR014729">
    <property type="entry name" value="Rossmann-like_a/b/a_fold"/>
</dbReference>
<dbReference type="InterPro" id="IPR032678">
    <property type="entry name" value="tRNA-synt_1_cat_dom"/>
</dbReference>
<dbReference type="InterPro" id="IPR009080">
    <property type="entry name" value="tRNAsynth_Ia_anticodon-bd"/>
</dbReference>
<dbReference type="NCBIfam" id="TIGR00435">
    <property type="entry name" value="cysS"/>
    <property type="match status" value="1"/>
</dbReference>
<dbReference type="PANTHER" id="PTHR10890:SF3">
    <property type="entry name" value="CYSTEINE--TRNA LIGASE, CYTOPLASMIC"/>
    <property type="match status" value="1"/>
</dbReference>
<dbReference type="PANTHER" id="PTHR10890">
    <property type="entry name" value="CYSTEINYL-TRNA SYNTHETASE"/>
    <property type="match status" value="1"/>
</dbReference>
<dbReference type="Pfam" id="PF23493">
    <property type="entry name" value="CysS_C"/>
    <property type="match status" value="1"/>
</dbReference>
<dbReference type="Pfam" id="PF09190">
    <property type="entry name" value="DALR_2"/>
    <property type="match status" value="1"/>
</dbReference>
<dbReference type="Pfam" id="PF01406">
    <property type="entry name" value="tRNA-synt_1e"/>
    <property type="match status" value="1"/>
</dbReference>
<dbReference type="PRINTS" id="PR00983">
    <property type="entry name" value="TRNASYNTHCYS"/>
</dbReference>
<dbReference type="SMART" id="SM00840">
    <property type="entry name" value="DALR_2"/>
    <property type="match status" value="1"/>
</dbReference>
<dbReference type="SUPFAM" id="SSF47323">
    <property type="entry name" value="Anticodon-binding domain of a subclass of class I aminoacyl-tRNA synthetases"/>
    <property type="match status" value="1"/>
</dbReference>
<dbReference type="SUPFAM" id="SSF52374">
    <property type="entry name" value="Nucleotidylyl transferase"/>
    <property type="match status" value="1"/>
</dbReference>
<reference key="1">
    <citation type="submission" date="2007-04" db="EMBL/GenBank/DDBJ databases">
        <title>Genome sequence of the thermophilic hydrogen-producing bacterium Caldicellulosiruptor saccharolyticus DSM 8903.</title>
        <authorList>
            <person name="Copeland A."/>
            <person name="Lucas S."/>
            <person name="Lapidus A."/>
            <person name="Barry K."/>
            <person name="Detter J.C."/>
            <person name="Glavina del Rio T."/>
            <person name="Hammon N."/>
            <person name="Israni S."/>
            <person name="Dalin E."/>
            <person name="Tice H."/>
            <person name="Pitluck S."/>
            <person name="Kiss H."/>
            <person name="Brettin T."/>
            <person name="Bruce D."/>
            <person name="Han C."/>
            <person name="Schmutz J."/>
            <person name="Larimer F."/>
            <person name="Land M."/>
            <person name="Hauser L."/>
            <person name="Kyrpides N."/>
            <person name="Lykidis A."/>
            <person name="van de Werken H.J.G."/>
            <person name="Verhaart M.R.A."/>
            <person name="VanFossen A.L."/>
            <person name="Lewis D.L."/>
            <person name="Nichols J.D."/>
            <person name="Goorissen H.P."/>
            <person name="van Niel E.W.J."/>
            <person name="Stams F.J.M."/>
            <person name="Willquist K.U."/>
            <person name="Ward D.E."/>
            <person name="van der Oost J."/>
            <person name="Kelly R.M."/>
            <person name="Kengen S.M.W."/>
            <person name="Richardson P."/>
        </authorList>
    </citation>
    <scope>NUCLEOTIDE SEQUENCE [LARGE SCALE GENOMIC DNA]</scope>
    <source>
        <strain>ATCC 43494 / DSM 8903 / Tp8T 6331</strain>
    </source>
</reference>
<feature type="chain" id="PRO_0000332798" description="Cysteine--tRNA ligase">
    <location>
        <begin position="1"/>
        <end position="465"/>
    </location>
</feature>
<feature type="short sequence motif" description="'HIGH' region">
    <location>
        <begin position="29"/>
        <end position="39"/>
    </location>
</feature>
<feature type="short sequence motif" description="'KMSKS' region">
    <location>
        <begin position="264"/>
        <end position="268"/>
    </location>
</feature>
<feature type="binding site" evidence="1">
    <location>
        <position position="27"/>
    </location>
    <ligand>
        <name>Zn(2+)</name>
        <dbReference type="ChEBI" id="CHEBI:29105"/>
    </ligand>
</feature>
<feature type="binding site" evidence="1">
    <location>
        <position position="207"/>
    </location>
    <ligand>
        <name>Zn(2+)</name>
        <dbReference type="ChEBI" id="CHEBI:29105"/>
    </ligand>
</feature>
<feature type="binding site" evidence="1">
    <location>
        <position position="232"/>
    </location>
    <ligand>
        <name>Zn(2+)</name>
        <dbReference type="ChEBI" id="CHEBI:29105"/>
    </ligand>
</feature>
<feature type="binding site" evidence="1">
    <location>
        <position position="236"/>
    </location>
    <ligand>
        <name>Zn(2+)</name>
        <dbReference type="ChEBI" id="CHEBI:29105"/>
    </ligand>
</feature>
<feature type="binding site" evidence="1">
    <location>
        <position position="267"/>
    </location>
    <ligand>
        <name>ATP</name>
        <dbReference type="ChEBI" id="CHEBI:30616"/>
    </ligand>
</feature>
<gene>
    <name evidence="1" type="primary">cysS</name>
    <name type="ordered locus">Csac_0708</name>
</gene>
<evidence type="ECO:0000255" key="1">
    <source>
        <dbReference type="HAMAP-Rule" id="MF_00041"/>
    </source>
</evidence>
<accession>A4XHE2</accession>
<comment type="catalytic activity">
    <reaction evidence="1">
        <text>tRNA(Cys) + L-cysteine + ATP = L-cysteinyl-tRNA(Cys) + AMP + diphosphate</text>
        <dbReference type="Rhea" id="RHEA:17773"/>
        <dbReference type="Rhea" id="RHEA-COMP:9661"/>
        <dbReference type="Rhea" id="RHEA-COMP:9679"/>
        <dbReference type="ChEBI" id="CHEBI:30616"/>
        <dbReference type="ChEBI" id="CHEBI:33019"/>
        <dbReference type="ChEBI" id="CHEBI:35235"/>
        <dbReference type="ChEBI" id="CHEBI:78442"/>
        <dbReference type="ChEBI" id="CHEBI:78517"/>
        <dbReference type="ChEBI" id="CHEBI:456215"/>
        <dbReference type="EC" id="6.1.1.16"/>
    </reaction>
</comment>
<comment type="cofactor">
    <cofactor evidence="1">
        <name>Zn(2+)</name>
        <dbReference type="ChEBI" id="CHEBI:29105"/>
    </cofactor>
    <text evidence="1">Binds 1 zinc ion per subunit.</text>
</comment>
<comment type="subunit">
    <text evidence="1">Monomer.</text>
</comment>
<comment type="subcellular location">
    <subcellularLocation>
        <location evidence="1">Cytoplasm</location>
    </subcellularLocation>
</comment>
<comment type="similarity">
    <text evidence="1">Belongs to the class-I aminoacyl-tRNA synthetase family.</text>
</comment>
<sequence length="465" mass="53865">MKLYNTLTMTKEEFEPLEEGKVKMYVCGPTVYDFIHIGNARPLIVFDTLRRYFEYKGYEVIYIQNFTDVEDKMINRANKEGITVFELAERFIQEYYKDADRLNVRRATKSPRATEEIEDMIALIQRLIDKGYAYVVDGDVYFRTRKFAEYGKLSHKNIEDLMAGARVDPSEKKEDPLDFALWKAKKEGEPAWNSPWGEGRPGWHIECSVMAMKYLGQTIDIHAGGQDLIFPHHENEIAQSEAATGKPFARFWLHNGYVNINNEKMSKSLGNFFTVREIIEKYHPEALRLFMLQAHYRKPLNFSIDLIEQAEVALKRIYTCYENLEFLIQNAASSSENDDKLKAAIEELKAKFIDAMEDDLNTAEATGYLFEMVREINTHANSCSKETLTFAKDILKELCSILGILEQYSAKEEAIPQEILELVEKRNQARKAKNFLEADRIRDELKSLGYIVLDTPQGTKVERIK</sequence>
<name>SYC_CALS8</name>
<organism>
    <name type="scientific">Caldicellulosiruptor saccharolyticus (strain ATCC 43494 / DSM 8903 / Tp8T 6331)</name>
    <dbReference type="NCBI Taxonomy" id="351627"/>
    <lineage>
        <taxon>Bacteria</taxon>
        <taxon>Bacillati</taxon>
        <taxon>Bacillota</taxon>
        <taxon>Bacillota incertae sedis</taxon>
        <taxon>Caldicellulosiruptorales</taxon>
        <taxon>Caldicellulosiruptoraceae</taxon>
        <taxon>Caldicellulosiruptor</taxon>
    </lineage>
</organism>